<feature type="transit peptide" description="Mitochondrion" evidence="2">
    <location>
        <begin position="1"/>
        <end position="31"/>
    </location>
</feature>
<feature type="chain" id="PRO_0000273068" description="Small ribosomal subunit protein uS3m">
    <location>
        <begin position="32"/>
        <end position="163"/>
    </location>
</feature>
<organism>
    <name type="scientific">Danio rerio</name>
    <name type="common">Zebrafish</name>
    <name type="synonym">Brachydanio rerio</name>
    <dbReference type="NCBI Taxonomy" id="7955"/>
    <lineage>
        <taxon>Eukaryota</taxon>
        <taxon>Metazoa</taxon>
        <taxon>Chordata</taxon>
        <taxon>Craniata</taxon>
        <taxon>Vertebrata</taxon>
        <taxon>Euteleostomi</taxon>
        <taxon>Actinopterygii</taxon>
        <taxon>Neopterygii</taxon>
        <taxon>Teleostei</taxon>
        <taxon>Ostariophysi</taxon>
        <taxon>Cypriniformes</taxon>
        <taxon>Danionidae</taxon>
        <taxon>Danioninae</taxon>
        <taxon>Danio</taxon>
    </lineage>
</organism>
<gene>
    <name type="primary">mrps24</name>
    <name type="ORF">zgc:112331</name>
</gene>
<comment type="subunit">
    <text evidence="1">Component of the mitochondrial ribosome small subunit (28S) which comprises a 12S rRNA and about 30 distinct proteins.</text>
</comment>
<comment type="subcellular location">
    <subcellularLocation>
        <location evidence="1">Mitochondrion</location>
    </subcellularLocation>
</comment>
<comment type="similarity">
    <text evidence="3">Belongs to the universal ribosomal protein uS3 family.</text>
</comment>
<reference key="1">
    <citation type="submission" date="2005-05" db="EMBL/GenBank/DDBJ databases">
        <authorList>
            <consortium name="NIH - Zebrafish Gene Collection (ZGC) project"/>
        </authorList>
    </citation>
    <scope>NUCLEOTIDE SEQUENCE [LARGE SCALE MRNA]</scope>
    <source>
        <tissue>Larval eye</tissue>
    </source>
</reference>
<accession>Q502C1</accession>
<sequence>MAASLIRQTKLLSVFSSAGCFRSIHSTAACLKNRAARIRVGKGDRPLTYEQAHHPHHISHRKGWLSQHTGNLHAEGGAAERVLEDVFIRRFIFGTFHSCLADELVIKRRGNVLIICAVMIQKLLPSKFYFLLGYTEELLSHFYKCPVKMELQLVDEKVVYKYL</sequence>
<evidence type="ECO:0000250" key="1">
    <source>
        <dbReference type="UniProtKB" id="Q2M2T7"/>
    </source>
</evidence>
<evidence type="ECO:0000255" key="2"/>
<evidence type="ECO:0000305" key="3"/>
<protein>
    <recommendedName>
        <fullName evidence="3">Small ribosomal subunit protein uS3m</fullName>
    </recommendedName>
    <alternativeName>
        <fullName>28S ribosomal protein S24, mitochondrial</fullName>
        <shortName>MRP-S24</shortName>
        <shortName>S24mt</shortName>
    </alternativeName>
</protein>
<keyword id="KW-0496">Mitochondrion</keyword>
<keyword id="KW-1185">Reference proteome</keyword>
<keyword id="KW-0687">Ribonucleoprotein</keyword>
<keyword id="KW-0689">Ribosomal protein</keyword>
<keyword id="KW-0809">Transit peptide</keyword>
<name>RT24_DANRE</name>
<dbReference type="EMBL" id="BC095767">
    <property type="protein sequence ID" value="AAH95767.1"/>
    <property type="molecule type" value="mRNA"/>
</dbReference>
<dbReference type="RefSeq" id="NP_001018518.1">
    <property type="nucleotide sequence ID" value="NM_001020682.2"/>
</dbReference>
<dbReference type="SMR" id="Q502C1"/>
<dbReference type="FunCoup" id="Q502C1">
    <property type="interactions" value="1369"/>
</dbReference>
<dbReference type="STRING" id="7955.ENSDARP00000134058"/>
<dbReference type="PaxDb" id="7955-ENSDARP00000062347"/>
<dbReference type="Ensembl" id="ENSDART00000159347">
    <property type="protein sequence ID" value="ENSDARP00000134058"/>
    <property type="gene ID" value="ENSDARG00000100116"/>
</dbReference>
<dbReference type="GeneID" id="553711"/>
<dbReference type="KEGG" id="dre:553711"/>
<dbReference type="AGR" id="ZFIN:ZDB-GENE-050522-393"/>
<dbReference type="CTD" id="64951"/>
<dbReference type="ZFIN" id="ZDB-GENE-050522-393">
    <property type="gene designation" value="mrps24"/>
</dbReference>
<dbReference type="eggNOG" id="ENOG502RXU1">
    <property type="taxonomic scope" value="Eukaryota"/>
</dbReference>
<dbReference type="HOGENOM" id="CLU_134150_1_0_1"/>
<dbReference type="InParanoid" id="Q502C1"/>
<dbReference type="OMA" id="FLQGYTE"/>
<dbReference type="OrthoDB" id="5950413at2759"/>
<dbReference type="PhylomeDB" id="Q502C1"/>
<dbReference type="TreeFam" id="TF324311"/>
<dbReference type="Reactome" id="R-DRE-5389840">
    <property type="pathway name" value="Mitochondrial translation elongation"/>
</dbReference>
<dbReference type="Reactome" id="R-DRE-5419276">
    <property type="pathway name" value="Mitochondrial translation termination"/>
</dbReference>
<dbReference type="PRO" id="PR:Q502C1"/>
<dbReference type="Proteomes" id="UP000000437">
    <property type="component" value="Chromosome 10"/>
</dbReference>
<dbReference type="Bgee" id="ENSDARG00000100116">
    <property type="expression patterns" value="Expressed in muscle tissue and 29 other cell types or tissues"/>
</dbReference>
<dbReference type="GO" id="GO:0005763">
    <property type="term" value="C:mitochondrial small ribosomal subunit"/>
    <property type="evidence" value="ECO:0000250"/>
    <property type="project" value="UniProtKB"/>
</dbReference>
<dbReference type="GO" id="GO:0003735">
    <property type="term" value="F:structural constituent of ribosome"/>
    <property type="evidence" value="ECO:0000250"/>
    <property type="project" value="UniProtKB"/>
</dbReference>
<dbReference type="GO" id="GO:0032543">
    <property type="term" value="P:mitochondrial translation"/>
    <property type="evidence" value="ECO:0000250"/>
    <property type="project" value="UniProtKB"/>
</dbReference>
<dbReference type="InterPro" id="IPR026146">
    <property type="entry name" value="Ribosomal_uS3m"/>
</dbReference>
<dbReference type="PANTHER" id="PTHR21244">
    <property type="entry name" value="MITOCHONDRIAL 28S RIBOSOMAL PROTEIN S24"/>
    <property type="match status" value="1"/>
</dbReference>
<dbReference type="PANTHER" id="PTHR21244:SF1">
    <property type="entry name" value="SMALL RIBOSOMAL SUBUNIT PROTEIN US3M"/>
    <property type="match status" value="1"/>
</dbReference>
<dbReference type="Pfam" id="PF14955">
    <property type="entry name" value="MRP-S24"/>
    <property type="match status" value="1"/>
</dbReference>
<proteinExistence type="evidence at transcript level"/>